<keyword id="KW-0067">ATP-binding</keyword>
<keyword id="KW-0408">Iron</keyword>
<keyword id="KW-0411">Iron-sulfur</keyword>
<keyword id="KW-0479">Metal-binding</keyword>
<keyword id="KW-0535">Nitrogen fixation</keyword>
<keyword id="KW-0547">Nucleotide-binding</keyword>
<keyword id="KW-0560">Oxidoreductase</keyword>
<gene>
    <name type="primary">nifK</name>
</gene>
<dbReference type="EC" id="1.18.6.1"/>
<dbReference type="EMBL" id="U75887">
    <property type="protein sequence ID" value="AAC45516.1"/>
    <property type="molecule type" value="Genomic_DNA"/>
</dbReference>
<dbReference type="PIR" id="T10094">
    <property type="entry name" value="T10094"/>
</dbReference>
<dbReference type="SMR" id="P0CW52"/>
<dbReference type="DIP" id="DIP-61202N"/>
<dbReference type="IntAct" id="P0CW52">
    <property type="interactions" value="3"/>
</dbReference>
<dbReference type="GO" id="GO:0005524">
    <property type="term" value="F:ATP binding"/>
    <property type="evidence" value="ECO:0007669"/>
    <property type="project" value="UniProtKB-KW"/>
</dbReference>
<dbReference type="GO" id="GO:0051536">
    <property type="term" value="F:iron-sulfur cluster binding"/>
    <property type="evidence" value="ECO:0007669"/>
    <property type="project" value="UniProtKB-KW"/>
</dbReference>
<dbReference type="GO" id="GO:0046872">
    <property type="term" value="F:metal ion binding"/>
    <property type="evidence" value="ECO:0007669"/>
    <property type="project" value="UniProtKB-KW"/>
</dbReference>
<dbReference type="GO" id="GO:0016163">
    <property type="term" value="F:nitrogenase activity"/>
    <property type="evidence" value="ECO:0007669"/>
    <property type="project" value="UniProtKB-EC"/>
</dbReference>
<dbReference type="GO" id="GO:0009399">
    <property type="term" value="P:nitrogen fixation"/>
    <property type="evidence" value="ECO:0007669"/>
    <property type="project" value="UniProtKB-KW"/>
</dbReference>
<dbReference type="CDD" id="cd01965">
    <property type="entry name" value="Nitrogenase_MoFe_beta_like"/>
    <property type="match status" value="1"/>
</dbReference>
<dbReference type="Gene3D" id="3.40.50.1980">
    <property type="entry name" value="Nitrogenase molybdenum iron protein domain"/>
    <property type="match status" value="3"/>
</dbReference>
<dbReference type="Gene3D" id="1.20.89.10">
    <property type="entry name" value="Nitrogenase Molybdenum-iron Protein, subunit B, domain 4"/>
    <property type="match status" value="1"/>
</dbReference>
<dbReference type="InterPro" id="IPR050152">
    <property type="entry name" value="ChlB/BchB/BchZ"/>
</dbReference>
<dbReference type="InterPro" id="IPR000510">
    <property type="entry name" value="Nase/OxRdtase_comp1"/>
</dbReference>
<dbReference type="InterPro" id="IPR000318">
    <property type="entry name" value="Nase_comp1_CS"/>
</dbReference>
<dbReference type="PANTHER" id="PTHR33712">
    <property type="entry name" value="LIGHT-INDEPENDENT PROTOCHLOROPHYLLIDE REDUCTASE SUBUNIT B"/>
    <property type="match status" value="1"/>
</dbReference>
<dbReference type="PANTHER" id="PTHR33712:SF7">
    <property type="entry name" value="LIGHT-INDEPENDENT PROTOCHLOROPHYLLIDE REDUCTASE SUBUNIT B"/>
    <property type="match status" value="1"/>
</dbReference>
<dbReference type="Pfam" id="PF00148">
    <property type="entry name" value="Oxidored_nitro"/>
    <property type="match status" value="1"/>
</dbReference>
<dbReference type="SUPFAM" id="SSF53807">
    <property type="entry name" value="Helical backbone' metal receptor"/>
    <property type="match status" value="1"/>
</dbReference>
<dbReference type="PROSITE" id="PS00699">
    <property type="entry name" value="NITROGENASE_1_1"/>
    <property type="match status" value="1"/>
</dbReference>
<dbReference type="PROSITE" id="PS00090">
    <property type="entry name" value="NITROGENASE_1_2"/>
    <property type="match status" value="1"/>
</dbReference>
<proteinExistence type="inferred from homology"/>
<comment type="function">
    <text>This molybdenum-iron protein is part of the nitrogenase complex that catalyzes the key enzymatic reactions in nitrogen fixation.</text>
</comment>
<comment type="catalytic activity">
    <reaction>
        <text>N2 + 8 reduced [2Fe-2S]-[ferredoxin] + 16 ATP + 16 H2O = H2 + 8 oxidized [2Fe-2S]-[ferredoxin] + 2 NH4(+) + 16 ADP + 16 phosphate + 6 H(+)</text>
        <dbReference type="Rhea" id="RHEA:21448"/>
        <dbReference type="Rhea" id="RHEA-COMP:10000"/>
        <dbReference type="Rhea" id="RHEA-COMP:10001"/>
        <dbReference type="ChEBI" id="CHEBI:15377"/>
        <dbReference type="ChEBI" id="CHEBI:15378"/>
        <dbReference type="ChEBI" id="CHEBI:17997"/>
        <dbReference type="ChEBI" id="CHEBI:18276"/>
        <dbReference type="ChEBI" id="CHEBI:28938"/>
        <dbReference type="ChEBI" id="CHEBI:30616"/>
        <dbReference type="ChEBI" id="CHEBI:33737"/>
        <dbReference type="ChEBI" id="CHEBI:33738"/>
        <dbReference type="ChEBI" id="CHEBI:43474"/>
        <dbReference type="ChEBI" id="CHEBI:456216"/>
        <dbReference type="EC" id="1.18.6.1"/>
    </reaction>
</comment>
<comment type="cofactor">
    <cofactor evidence="1">
        <name>[8Fe-7S] cluster</name>
        <dbReference type="ChEBI" id="CHEBI:21143"/>
    </cofactor>
    <text evidence="1">Binds 1 [8Fe-7S] cluster per heterodimer.</text>
</comment>
<comment type="subunit">
    <text>Tetramer of two alpha and two beta chains. Forms complex with the iron protein (nitrogenase component 2).</text>
</comment>
<comment type="similarity">
    <text evidence="2">Belongs to the NifD/NifK/NifE/NifN family.</text>
</comment>
<organism>
    <name type="scientific">Methanococcus maripaludis</name>
    <name type="common">Methanococcus deltae</name>
    <dbReference type="NCBI Taxonomy" id="39152"/>
    <lineage>
        <taxon>Archaea</taxon>
        <taxon>Methanobacteriati</taxon>
        <taxon>Methanobacteriota</taxon>
        <taxon>Methanomada group</taxon>
        <taxon>Methanococci</taxon>
        <taxon>Methanococcales</taxon>
        <taxon>Methanococcaceae</taxon>
        <taxon>Methanococcus</taxon>
    </lineage>
</organism>
<evidence type="ECO:0000250" key="1"/>
<evidence type="ECO:0000305" key="2"/>
<name>NIFK_METMI</name>
<sequence length="462" mass="50475">MSELNVITKERTAVINPIVTCQPLGAMYAVSGIERGMPLVHGSQGCSTFVRYGFARHFREPADIAVTSLHEDAAVFGGRKNLISGLGNLAARFKPDVMGVVTTCSSEIIGDDVAGFIKTAKVEIAKKMGEEAANKIKIVQINTPSFVEHQFKGYDNAIKAIVDTLAEPKDEENGKLIIIPGIVNPGDIREIKHMLSLMGVEGILLTDTSDPFDSPLRPSKADKNPYYQKGGTPLADLQDCANSLGTISLANYANSAPASLEKKYNMPSKVSEAPIGIQNTDSFIRTVKKFTGNDVTDEILDERGIVIDAMADVASRYLFGRKVAIYGDPSITVGMARFVAELGMIPKVVCTGVKNEYFVNDLKKVAKESDEDIDALFGQDLRALDVYLKENPVDLMIGSSDGRLMAKDLGIPLYRVGYPVYDRVGYQRRPIIGYNGALNLVDGITNTILDKYYETQDWKLQQ</sequence>
<reference key="1">
    <citation type="journal article" date="1997" name="J. Bacteriol.">
        <title>Nitrogenase phylogeny and the molybdenum dependence of nitrogen fixation in Methanococcus maripaludis.</title>
        <authorList>
            <person name="Kessler P.S."/>
            <person name="McLarnan J."/>
            <person name="Leigh J.A."/>
        </authorList>
    </citation>
    <scope>NUCLEOTIDE SEQUENCE [GENOMIC DNA]</scope>
    <source>
        <strain>ATCC 43000 / DSM 2067 / JCM 10722 / JJ</strain>
    </source>
</reference>
<protein>
    <recommendedName>
        <fullName>Nitrogenase molybdenum-iron protein beta chain</fullName>
        <ecNumber>1.18.6.1</ecNumber>
    </recommendedName>
    <alternativeName>
        <fullName>Dinitrogenase</fullName>
    </alternativeName>
    <alternativeName>
        <fullName>Nitrogenase component I</fullName>
    </alternativeName>
</protein>
<accession>P0CW52</accession>
<accession>P71527</accession>
<feature type="chain" id="PRO_0000153103" description="Nitrogenase molybdenum-iron protein beta chain">
    <location>
        <begin position="1"/>
        <end position="462"/>
    </location>
</feature>
<feature type="binding site" evidence="1">
    <location>
        <position position="21"/>
    </location>
    <ligand>
        <name>[8Fe-7S] cluster</name>
        <dbReference type="ChEBI" id="CHEBI:21143"/>
        <note>ligand shared with alpha chain</note>
    </ligand>
</feature>
<feature type="binding site" evidence="1">
    <location>
        <position position="46"/>
    </location>
    <ligand>
        <name>[8Fe-7S] cluster</name>
        <dbReference type="ChEBI" id="CHEBI:21143"/>
        <note>ligand shared with alpha chain</note>
    </ligand>
</feature>
<feature type="binding site" evidence="1">
    <location>
        <position position="104"/>
    </location>
    <ligand>
        <name>[8Fe-7S] cluster</name>
        <dbReference type="ChEBI" id="CHEBI:21143"/>
        <note>ligand shared with alpha chain</note>
    </ligand>
</feature>
<feature type="binding site" evidence="1">
    <location>
        <position position="145"/>
    </location>
    <ligand>
        <name>[8Fe-7S] cluster</name>
        <dbReference type="ChEBI" id="CHEBI:21143"/>
        <note>ligand shared with alpha chain</note>
    </ligand>
</feature>